<feature type="chain" id="PRO_1000080585" description="Na(+)-translocating NADH-quinone reductase subunit F">
    <location>
        <begin position="1"/>
        <end position="405"/>
    </location>
</feature>
<feature type="transmembrane region" description="Helical" evidence="1">
    <location>
        <begin position="3"/>
        <end position="23"/>
    </location>
</feature>
<feature type="domain" description="2Fe-2S ferredoxin-type" evidence="1">
    <location>
        <begin position="32"/>
        <end position="124"/>
    </location>
</feature>
<feature type="domain" description="FAD-binding FR-type" evidence="1">
    <location>
        <begin position="127"/>
        <end position="267"/>
    </location>
</feature>
<feature type="binding site" evidence="1">
    <location>
        <position position="67"/>
    </location>
    <ligand>
        <name>[2Fe-2S] cluster</name>
        <dbReference type="ChEBI" id="CHEBI:190135"/>
    </ligand>
</feature>
<feature type="binding site" evidence="1">
    <location>
        <position position="73"/>
    </location>
    <ligand>
        <name>[2Fe-2S] cluster</name>
        <dbReference type="ChEBI" id="CHEBI:190135"/>
    </ligand>
</feature>
<feature type="binding site" evidence="1">
    <location>
        <position position="76"/>
    </location>
    <ligand>
        <name>[2Fe-2S] cluster</name>
        <dbReference type="ChEBI" id="CHEBI:190135"/>
    </ligand>
</feature>
<feature type="binding site" evidence="1">
    <location>
        <position position="108"/>
    </location>
    <ligand>
        <name>[2Fe-2S] cluster</name>
        <dbReference type="ChEBI" id="CHEBI:190135"/>
    </ligand>
</feature>
<comment type="function">
    <text evidence="1">NQR complex catalyzes the reduction of ubiquinone-1 to ubiquinol by two successive reactions, coupled with the transport of Na(+) ions from the cytoplasm to the periplasm. The first step is catalyzed by NqrF, which accepts electrons from NADH and reduces ubiquinone-1 to ubisemiquinone by a one-electron transfer pathway.</text>
</comment>
<comment type="catalytic activity">
    <reaction evidence="1">
        <text>a ubiquinone + n Na(+)(in) + NADH + H(+) = a ubiquinol + n Na(+)(out) + NAD(+)</text>
        <dbReference type="Rhea" id="RHEA:47748"/>
        <dbReference type="Rhea" id="RHEA-COMP:9565"/>
        <dbReference type="Rhea" id="RHEA-COMP:9566"/>
        <dbReference type="ChEBI" id="CHEBI:15378"/>
        <dbReference type="ChEBI" id="CHEBI:16389"/>
        <dbReference type="ChEBI" id="CHEBI:17976"/>
        <dbReference type="ChEBI" id="CHEBI:29101"/>
        <dbReference type="ChEBI" id="CHEBI:57540"/>
        <dbReference type="ChEBI" id="CHEBI:57945"/>
        <dbReference type="EC" id="7.2.1.1"/>
    </reaction>
</comment>
<comment type="cofactor">
    <cofactor evidence="1">
        <name>[2Fe-2S] cluster</name>
        <dbReference type="ChEBI" id="CHEBI:190135"/>
    </cofactor>
    <text evidence="1">Binds 1 [2Fe-2S] cluster.</text>
</comment>
<comment type="cofactor">
    <cofactor evidence="1">
        <name>FAD</name>
        <dbReference type="ChEBI" id="CHEBI:57692"/>
    </cofactor>
</comment>
<comment type="subunit">
    <text evidence="1">Composed of six subunits; NqrA, NqrB, NqrC, NqrD, NqrE and NqrF.</text>
</comment>
<comment type="subcellular location">
    <subcellularLocation>
        <location evidence="1">Cell inner membrane</location>
        <topology evidence="1">Single-pass membrane protein</topology>
    </subcellularLocation>
</comment>
<comment type="similarity">
    <text evidence="1">Belongs to the NqrF family.</text>
</comment>
<evidence type="ECO:0000255" key="1">
    <source>
        <dbReference type="HAMAP-Rule" id="MF_00430"/>
    </source>
</evidence>
<sequence>MEIILGIVMFTVIVLALALMILFAKSKLVSEGDITIKVNDEKELTMPAGGKLLGALASQGIFVPSACGGGGSCGQCRVVVKSGGGDILPTELSHISKREAREGCRLSCQVNVKTDMDIEVPEEVFGVKKWECTVISNDNKATFIKELKLAIPEGEEVPFRAGGYIQIEAPPHTVAYKDFDIPKEYHEDWDKYNLWQYVSKVNEPILRAYSMASYPEEKGIIMLNVRIATPPPRVPNAPPGQMSSYIWSLKPGDKVTISGPFGEFFAKDTDAEMVFIGGGAGMAPMRSHIFDQLKRLHSKRKITFWYGARSKREMFYVEDFDQLAAEFPNFTWHVALSDPLPEDNWDGYTGFIHNVVYENHLKNHEAPEDCEFYMCGPPIMNQSVIKMLKDLGVEDENILLDDFGG</sequence>
<accession>Q5F6X5</accession>
<protein>
    <recommendedName>
        <fullName evidence="1">Na(+)-translocating NADH-quinone reductase subunit F</fullName>
        <shortName evidence="1">Na(+)-NQR subunit F</shortName>
        <shortName evidence="1">Na(+)-translocating NQR subunit F</shortName>
        <ecNumber evidence="1">7.2.1.1</ecNumber>
    </recommendedName>
    <alternativeName>
        <fullName evidence="1">NQR complex subunit F</fullName>
    </alternativeName>
    <alternativeName>
        <fullName evidence="1">NQR-1 subunit F</fullName>
    </alternativeName>
</protein>
<organism>
    <name type="scientific">Neisseria gonorrhoeae (strain ATCC 700825 / FA 1090)</name>
    <dbReference type="NCBI Taxonomy" id="242231"/>
    <lineage>
        <taxon>Bacteria</taxon>
        <taxon>Pseudomonadati</taxon>
        <taxon>Pseudomonadota</taxon>
        <taxon>Betaproteobacteria</taxon>
        <taxon>Neisseriales</taxon>
        <taxon>Neisseriaceae</taxon>
        <taxon>Neisseria</taxon>
    </lineage>
</organism>
<keyword id="KW-0001">2Fe-2S</keyword>
<keyword id="KW-0997">Cell inner membrane</keyword>
<keyword id="KW-1003">Cell membrane</keyword>
<keyword id="KW-0274">FAD</keyword>
<keyword id="KW-0285">Flavoprotein</keyword>
<keyword id="KW-0406">Ion transport</keyword>
<keyword id="KW-0408">Iron</keyword>
<keyword id="KW-0411">Iron-sulfur</keyword>
<keyword id="KW-0472">Membrane</keyword>
<keyword id="KW-0479">Metal-binding</keyword>
<keyword id="KW-0520">NAD</keyword>
<keyword id="KW-1185">Reference proteome</keyword>
<keyword id="KW-0915">Sodium</keyword>
<keyword id="KW-0739">Sodium transport</keyword>
<keyword id="KW-1278">Translocase</keyword>
<keyword id="KW-0812">Transmembrane</keyword>
<keyword id="KW-1133">Transmembrane helix</keyword>
<keyword id="KW-0813">Transport</keyword>
<keyword id="KW-0830">Ubiquinone</keyword>
<reference key="1">
    <citation type="submission" date="2003-03" db="EMBL/GenBank/DDBJ databases">
        <title>The complete genome sequence of Neisseria gonorrhoeae.</title>
        <authorList>
            <person name="Lewis L.A."/>
            <person name="Gillaspy A.F."/>
            <person name="McLaughlin R.E."/>
            <person name="Gipson M."/>
            <person name="Ducey T.F."/>
            <person name="Ownbey T."/>
            <person name="Hartman K."/>
            <person name="Nydick C."/>
            <person name="Carson M.B."/>
            <person name="Vaughn J."/>
            <person name="Thomson C."/>
            <person name="Song L."/>
            <person name="Lin S."/>
            <person name="Yuan X."/>
            <person name="Najar F."/>
            <person name="Zhan M."/>
            <person name="Ren Q."/>
            <person name="Zhu H."/>
            <person name="Qi S."/>
            <person name="Kenton S.M."/>
            <person name="Lai H."/>
            <person name="White J.D."/>
            <person name="Clifton S."/>
            <person name="Roe B.A."/>
            <person name="Dyer D.W."/>
        </authorList>
    </citation>
    <scope>NUCLEOTIDE SEQUENCE [LARGE SCALE GENOMIC DNA]</scope>
    <source>
        <strain>ATCC 700825 / FA 1090</strain>
    </source>
</reference>
<name>NQRF_NEIG1</name>
<dbReference type="EC" id="7.2.1.1" evidence="1"/>
<dbReference type="EMBL" id="AE004969">
    <property type="protein sequence ID" value="AAW90062.1"/>
    <property type="molecule type" value="Genomic_DNA"/>
</dbReference>
<dbReference type="RefSeq" id="WP_010951261.1">
    <property type="nucleotide sequence ID" value="NC_002946.2"/>
</dbReference>
<dbReference type="RefSeq" id="YP_208474.1">
    <property type="nucleotide sequence ID" value="NC_002946.2"/>
</dbReference>
<dbReference type="SMR" id="Q5F6X5"/>
<dbReference type="STRING" id="242231.NGO_1418"/>
<dbReference type="KEGG" id="ngo:NGO_1418"/>
<dbReference type="PATRIC" id="fig|242231.10.peg.1670"/>
<dbReference type="HOGENOM" id="CLU_003827_7_2_4"/>
<dbReference type="Proteomes" id="UP000000535">
    <property type="component" value="Chromosome"/>
</dbReference>
<dbReference type="GO" id="GO:0005886">
    <property type="term" value="C:plasma membrane"/>
    <property type="evidence" value="ECO:0007669"/>
    <property type="project" value="UniProtKB-SubCell"/>
</dbReference>
<dbReference type="GO" id="GO:0051537">
    <property type="term" value="F:2 iron, 2 sulfur cluster binding"/>
    <property type="evidence" value="ECO:0007669"/>
    <property type="project" value="UniProtKB-KW"/>
</dbReference>
<dbReference type="GO" id="GO:0009055">
    <property type="term" value="F:electron transfer activity"/>
    <property type="evidence" value="ECO:0007669"/>
    <property type="project" value="UniProtKB-UniRule"/>
</dbReference>
<dbReference type="GO" id="GO:0046872">
    <property type="term" value="F:metal ion binding"/>
    <property type="evidence" value="ECO:0007669"/>
    <property type="project" value="UniProtKB-KW"/>
</dbReference>
<dbReference type="GO" id="GO:0016655">
    <property type="term" value="F:oxidoreductase activity, acting on NAD(P)H, quinone or similar compound as acceptor"/>
    <property type="evidence" value="ECO:0007669"/>
    <property type="project" value="InterPro"/>
</dbReference>
<dbReference type="GO" id="GO:0006814">
    <property type="term" value="P:sodium ion transport"/>
    <property type="evidence" value="ECO:0007669"/>
    <property type="project" value="UniProtKB-UniRule"/>
</dbReference>
<dbReference type="CDD" id="cd06188">
    <property type="entry name" value="NADH_quinone_reductase"/>
    <property type="match status" value="1"/>
</dbReference>
<dbReference type="FunFam" id="2.40.30.10:FF:000064">
    <property type="entry name" value="Na(+)-translocating NADH-quinone reductase subunit F"/>
    <property type="match status" value="1"/>
</dbReference>
<dbReference type="FunFam" id="3.40.50.80:FF:000014">
    <property type="entry name" value="Na(+)-translocating NADH-quinone reductase subunit F"/>
    <property type="match status" value="1"/>
</dbReference>
<dbReference type="Gene3D" id="3.10.20.30">
    <property type="match status" value="1"/>
</dbReference>
<dbReference type="Gene3D" id="3.40.50.80">
    <property type="entry name" value="Nucleotide-binding domain of ferredoxin-NADP reductase (FNR) module"/>
    <property type="match status" value="1"/>
</dbReference>
<dbReference type="Gene3D" id="2.40.30.10">
    <property type="entry name" value="Translation factors"/>
    <property type="match status" value="1"/>
</dbReference>
<dbReference type="HAMAP" id="MF_00430">
    <property type="entry name" value="NqrF"/>
    <property type="match status" value="1"/>
</dbReference>
<dbReference type="InterPro" id="IPR036010">
    <property type="entry name" value="2Fe-2S_ferredoxin-like_sf"/>
</dbReference>
<dbReference type="InterPro" id="IPR001041">
    <property type="entry name" value="2Fe-2S_ferredoxin-type"/>
</dbReference>
<dbReference type="InterPro" id="IPR012675">
    <property type="entry name" value="Beta-grasp_dom_sf"/>
</dbReference>
<dbReference type="InterPro" id="IPR008333">
    <property type="entry name" value="Cbr1-like_FAD-bd_dom"/>
</dbReference>
<dbReference type="InterPro" id="IPR017927">
    <property type="entry name" value="FAD-bd_FR_type"/>
</dbReference>
<dbReference type="InterPro" id="IPR039261">
    <property type="entry name" value="FNR_nucleotide-bd"/>
</dbReference>
<dbReference type="InterPro" id="IPR010205">
    <property type="entry name" value="NqrF"/>
</dbReference>
<dbReference type="InterPro" id="IPR001433">
    <property type="entry name" value="OxRdtase_FAD/NAD-bd"/>
</dbReference>
<dbReference type="InterPro" id="IPR017938">
    <property type="entry name" value="Riboflavin_synthase-like_b-brl"/>
</dbReference>
<dbReference type="NCBIfam" id="TIGR01941">
    <property type="entry name" value="nqrF"/>
    <property type="match status" value="1"/>
</dbReference>
<dbReference type="PANTHER" id="PTHR43644">
    <property type="entry name" value="NA(+)-TRANSLOCATING NADH-QUINONE REDUCTASE SUBUNIT"/>
    <property type="match status" value="1"/>
</dbReference>
<dbReference type="PANTHER" id="PTHR43644:SF1">
    <property type="entry name" value="NAD(P)H-FLAVIN REDUCTASE"/>
    <property type="match status" value="1"/>
</dbReference>
<dbReference type="Pfam" id="PF00970">
    <property type="entry name" value="FAD_binding_6"/>
    <property type="match status" value="1"/>
</dbReference>
<dbReference type="Pfam" id="PF00111">
    <property type="entry name" value="Fer2"/>
    <property type="match status" value="1"/>
</dbReference>
<dbReference type="Pfam" id="PF00175">
    <property type="entry name" value="NAD_binding_1"/>
    <property type="match status" value="1"/>
</dbReference>
<dbReference type="PIRSF" id="PIRSF000044">
    <property type="entry name" value="Cis_Diol_DH_RD"/>
    <property type="match status" value="1"/>
</dbReference>
<dbReference type="SUPFAM" id="SSF54292">
    <property type="entry name" value="2Fe-2S ferredoxin-like"/>
    <property type="match status" value="1"/>
</dbReference>
<dbReference type="SUPFAM" id="SSF52343">
    <property type="entry name" value="Ferredoxin reductase-like, C-terminal NADP-linked domain"/>
    <property type="match status" value="1"/>
</dbReference>
<dbReference type="SUPFAM" id="SSF63380">
    <property type="entry name" value="Riboflavin synthase domain-like"/>
    <property type="match status" value="1"/>
</dbReference>
<dbReference type="PROSITE" id="PS51085">
    <property type="entry name" value="2FE2S_FER_2"/>
    <property type="match status" value="1"/>
</dbReference>
<dbReference type="PROSITE" id="PS51384">
    <property type="entry name" value="FAD_FR"/>
    <property type="match status" value="1"/>
</dbReference>
<proteinExistence type="inferred from homology"/>
<gene>
    <name evidence="1" type="primary">nqrF</name>
    <name type="ordered locus">NGO_1418</name>
</gene>